<evidence type="ECO:0000250" key="1"/>
<evidence type="ECO:0000255" key="2"/>
<evidence type="ECO:0000255" key="3">
    <source>
        <dbReference type="PROSITE-ProRule" id="PRU00274"/>
    </source>
</evidence>
<comment type="function">
    <text>Specificity similar to chymotrypsin.</text>
</comment>
<comment type="activity regulation">
    <text>Activated by an autocatalytic mechanism.</text>
</comment>
<comment type="subunit">
    <text>Monomer.</text>
</comment>
<comment type="subcellular location">
    <subcellularLocation>
        <location>Secreted</location>
        <location>Extracellular space</location>
    </subcellularLocation>
</comment>
<comment type="tissue specificity">
    <text>Expressed specifically in the distal quarter of the intestine.</text>
</comment>
<comment type="similarity">
    <text evidence="3">Belongs to the peptidase S1 family.</text>
</comment>
<name>CTRL_HALRU</name>
<accession>P35003</accession>
<proteinExistence type="evidence at protein level"/>
<organism>
    <name type="scientific">Haliotis rufescens</name>
    <name type="common">California red abalone</name>
    <dbReference type="NCBI Taxonomy" id="6454"/>
    <lineage>
        <taxon>Eukaryota</taxon>
        <taxon>Metazoa</taxon>
        <taxon>Spiralia</taxon>
        <taxon>Lophotrochozoa</taxon>
        <taxon>Mollusca</taxon>
        <taxon>Gastropoda</taxon>
        <taxon>Vetigastropoda</taxon>
        <taxon>Lepetellida</taxon>
        <taxon>Haliotoidea</taxon>
        <taxon>Haliotidae</taxon>
        <taxon>Haliotis</taxon>
    </lineage>
</organism>
<feature type="signal peptide" evidence="2">
    <location>
        <begin position="1"/>
        <end position="18"/>
    </location>
</feature>
<feature type="propeptide" id="PRO_0000027658" description="Activation peptide" evidence="2">
    <location>
        <begin position="19"/>
        <end position="23"/>
    </location>
</feature>
<feature type="chain" id="PRO_0000027659" description="Chymotrypsin-like serine proteinase">
    <location>
        <begin position="24"/>
        <end position="254"/>
    </location>
</feature>
<feature type="domain" description="Peptidase S1" evidence="3">
    <location>
        <begin position="24"/>
        <end position="254"/>
    </location>
</feature>
<feature type="active site" description="Charge relay system" evidence="1">
    <location>
        <position position="68"/>
    </location>
</feature>
<feature type="active site" description="Charge relay system" evidence="1">
    <location>
        <position position="117"/>
    </location>
</feature>
<feature type="active site" description="Charge relay system" evidence="1">
    <location>
        <position position="212"/>
    </location>
</feature>
<feature type="disulfide bond" evidence="3">
    <location>
        <begin position="53"/>
        <end position="69"/>
    </location>
</feature>
<feature type="disulfide bond" evidence="3">
    <location>
        <begin position="146"/>
        <end position="218"/>
    </location>
</feature>
<feature type="disulfide bond" evidence="3">
    <location>
        <begin position="181"/>
        <end position="199"/>
    </location>
</feature>
<feature type="disulfide bond" evidence="3">
    <location>
        <begin position="208"/>
        <end position="233"/>
    </location>
</feature>
<reference key="1">
    <citation type="journal article" date="1993" name="Arch. Biochem. Biophys.">
        <title>Molluscan chymotrypsin-like protease: structure, localization, and substrate specificity.</title>
        <authorList>
            <person name="Groppe J.C."/>
            <person name="Morse D.E."/>
        </authorList>
    </citation>
    <scope>NUCLEOTIDE SEQUENCE [MRNA]</scope>
    <scope>CHARACTERIZATION</scope>
    <source>
        <tissue>Gut</tissue>
    </source>
</reference>
<sequence length="254" mass="27250">MNALLNILLCTLAATALAEISPNIVGGSNAAAGEFPWQGSLQVRSGTSWFHICGCVLYTTSKALTAAHCLSNSASSYRLGFGMLRMNNVDGTEQYSSVTSYTNHPNYNGNAAGYPNDIAVLRLTSSMDTSSSAVGPSVWLLVERLCRTNMYDQRMGKTQWRWQHPNNLQKVDMTVLTNSDCSSRWSGISGATVNSGHICIFESGRSACSGDSGGPLVCGNTLTGITSWGISSCSGSYPSVYTRVSSFYNWVQTQ</sequence>
<keyword id="KW-1015">Disulfide bond</keyword>
<keyword id="KW-0378">Hydrolase</keyword>
<keyword id="KW-0645">Protease</keyword>
<keyword id="KW-0964">Secreted</keyword>
<keyword id="KW-0720">Serine protease</keyword>
<keyword id="KW-0732">Signal</keyword>
<keyword id="KW-0865">Zymogen</keyword>
<protein>
    <recommendedName>
        <fullName>Chymotrypsin-like serine proteinase</fullName>
        <ecNumber>3.4.21.-</ecNumber>
    </recommendedName>
</protein>
<dbReference type="EC" id="3.4.21.-"/>
<dbReference type="EMBL" id="X71438">
    <property type="protein sequence ID" value="CAA50572.1"/>
    <property type="molecule type" value="mRNA"/>
</dbReference>
<dbReference type="PIR" id="S35585">
    <property type="entry name" value="S35585"/>
</dbReference>
<dbReference type="SMR" id="P35003"/>
<dbReference type="MEROPS" id="S01.422"/>
<dbReference type="OrthoDB" id="6274970at2759"/>
<dbReference type="GO" id="GO:0005576">
    <property type="term" value="C:extracellular region"/>
    <property type="evidence" value="ECO:0007669"/>
    <property type="project" value="UniProtKB-SubCell"/>
</dbReference>
<dbReference type="GO" id="GO:0004252">
    <property type="term" value="F:serine-type endopeptidase activity"/>
    <property type="evidence" value="ECO:0007669"/>
    <property type="project" value="InterPro"/>
</dbReference>
<dbReference type="GO" id="GO:0006508">
    <property type="term" value="P:proteolysis"/>
    <property type="evidence" value="ECO:0007669"/>
    <property type="project" value="UniProtKB-KW"/>
</dbReference>
<dbReference type="CDD" id="cd00190">
    <property type="entry name" value="Tryp_SPc"/>
    <property type="match status" value="1"/>
</dbReference>
<dbReference type="FunFam" id="2.40.10.10:FF:000068">
    <property type="entry name" value="transmembrane protease serine 2"/>
    <property type="match status" value="1"/>
</dbReference>
<dbReference type="FunFam" id="2.40.10.10:FF:000036">
    <property type="entry name" value="Trypsin beta"/>
    <property type="match status" value="1"/>
</dbReference>
<dbReference type="Gene3D" id="2.40.10.10">
    <property type="entry name" value="Trypsin-like serine proteases"/>
    <property type="match status" value="1"/>
</dbReference>
<dbReference type="InterPro" id="IPR050430">
    <property type="entry name" value="Peptidase_S1"/>
</dbReference>
<dbReference type="InterPro" id="IPR009003">
    <property type="entry name" value="Peptidase_S1_PA"/>
</dbReference>
<dbReference type="InterPro" id="IPR043504">
    <property type="entry name" value="Peptidase_S1_PA_chymotrypsin"/>
</dbReference>
<dbReference type="InterPro" id="IPR001314">
    <property type="entry name" value="Peptidase_S1A"/>
</dbReference>
<dbReference type="InterPro" id="IPR001254">
    <property type="entry name" value="Trypsin_dom"/>
</dbReference>
<dbReference type="InterPro" id="IPR018114">
    <property type="entry name" value="TRYPSIN_HIS"/>
</dbReference>
<dbReference type="InterPro" id="IPR033116">
    <property type="entry name" value="TRYPSIN_SER"/>
</dbReference>
<dbReference type="PANTHER" id="PTHR24276:SF98">
    <property type="entry name" value="FI18310P1-RELATED"/>
    <property type="match status" value="1"/>
</dbReference>
<dbReference type="PANTHER" id="PTHR24276">
    <property type="entry name" value="POLYSERASE-RELATED"/>
    <property type="match status" value="1"/>
</dbReference>
<dbReference type="Pfam" id="PF00089">
    <property type="entry name" value="Trypsin"/>
    <property type="match status" value="1"/>
</dbReference>
<dbReference type="PRINTS" id="PR00722">
    <property type="entry name" value="CHYMOTRYPSIN"/>
</dbReference>
<dbReference type="SMART" id="SM00020">
    <property type="entry name" value="Tryp_SPc"/>
    <property type="match status" value="1"/>
</dbReference>
<dbReference type="SUPFAM" id="SSF50494">
    <property type="entry name" value="Trypsin-like serine proteases"/>
    <property type="match status" value="1"/>
</dbReference>
<dbReference type="PROSITE" id="PS50240">
    <property type="entry name" value="TRYPSIN_DOM"/>
    <property type="match status" value="1"/>
</dbReference>
<dbReference type="PROSITE" id="PS00134">
    <property type="entry name" value="TRYPSIN_HIS"/>
    <property type="match status" value="1"/>
</dbReference>
<dbReference type="PROSITE" id="PS00135">
    <property type="entry name" value="TRYPSIN_SER"/>
    <property type="match status" value="1"/>
</dbReference>